<proteinExistence type="inferred from homology"/>
<organism>
    <name type="scientific">Staphylococcus aureus (strain Mu3 / ATCC 700698)</name>
    <dbReference type="NCBI Taxonomy" id="418127"/>
    <lineage>
        <taxon>Bacteria</taxon>
        <taxon>Bacillati</taxon>
        <taxon>Bacillota</taxon>
        <taxon>Bacilli</taxon>
        <taxon>Bacillales</taxon>
        <taxon>Staphylococcaceae</taxon>
        <taxon>Staphylococcus</taxon>
    </lineage>
</organism>
<reference key="1">
    <citation type="journal article" date="2008" name="Antimicrob. Agents Chemother.">
        <title>Mutated response regulator graR is responsible for phenotypic conversion of Staphylococcus aureus from heterogeneous vancomycin-intermediate resistance to vancomycin-intermediate resistance.</title>
        <authorList>
            <person name="Neoh H.-M."/>
            <person name="Cui L."/>
            <person name="Yuzawa H."/>
            <person name="Takeuchi F."/>
            <person name="Matsuo M."/>
            <person name="Hiramatsu K."/>
        </authorList>
    </citation>
    <scope>NUCLEOTIDE SEQUENCE [LARGE SCALE GENOMIC DNA]</scope>
    <source>
        <strain>Mu3 / ATCC 700698</strain>
    </source>
</reference>
<accession>A7WZR5</accession>
<gene>
    <name type="ordered locus">SAHV_0762</name>
</gene>
<dbReference type="EMBL" id="AP009324">
    <property type="protein sequence ID" value="BAF77645.1"/>
    <property type="molecule type" value="Genomic_DNA"/>
</dbReference>
<dbReference type="SMR" id="A7WZR5"/>
<dbReference type="KEGG" id="saw:SAHV_0762"/>
<dbReference type="HOGENOM" id="CLU_059558_0_0_9"/>
<dbReference type="GO" id="GO:0005524">
    <property type="term" value="F:ATP binding"/>
    <property type="evidence" value="ECO:0007669"/>
    <property type="project" value="UniProtKB-UniRule"/>
</dbReference>
<dbReference type="GO" id="GO:0005525">
    <property type="term" value="F:GTP binding"/>
    <property type="evidence" value="ECO:0007669"/>
    <property type="project" value="UniProtKB-UniRule"/>
</dbReference>
<dbReference type="Gene3D" id="3.40.50.300">
    <property type="entry name" value="P-loop containing nucleotide triphosphate hydrolases"/>
    <property type="match status" value="1"/>
</dbReference>
<dbReference type="HAMAP" id="MF_00636">
    <property type="entry name" value="RapZ_like"/>
    <property type="match status" value="1"/>
</dbReference>
<dbReference type="InterPro" id="IPR027417">
    <property type="entry name" value="P-loop_NTPase"/>
</dbReference>
<dbReference type="InterPro" id="IPR005337">
    <property type="entry name" value="RapZ-like"/>
</dbReference>
<dbReference type="InterPro" id="IPR053930">
    <property type="entry name" value="RapZ-like_N"/>
</dbReference>
<dbReference type="InterPro" id="IPR053931">
    <property type="entry name" value="RapZ_C"/>
</dbReference>
<dbReference type="NCBIfam" id="NF003828">
    <property type="entry name" value="PRK05416.1"/>
    <property type="match status" value="1"/>
</dbReference>
<dbReference type="PANTHER" id="PTHR30448">
    <property type="entry name" value="RNASE ADAPTER PROTEIN RAPZ"/>
    <property type="match status" value="1"/>
</dbReference>
<dbReference type="PANTHER" id="PTHR30448:SF0">
    <property type="entry name" value="RNASE ADAPTER PROTEIN RAPZ"/>
    <property type="match status" value="1"/>
</dbReference>
<dbReference type="Pfam" id="PF22740">
    <property type="entry name" value="PapZ_C"/>
    <property type="match status" value="1"/>
</dbReference>
<dbReference type="Pfam" id="PF03668">
    <property type="entry name" value="RapZ-like_N"/>
    <property type="match status" value="1"/>
</dbReference>
<dbReference type="PIRSF" id="PIRSF005052">
    <property type="entry name" value="P-loopkin"/>
    <property type="match status" value="1"/>
</dbReference>
<dbReference type="SUPFAM" id="SSF52540">
    <property type="entry name" value="P-loop containing nucleoside triphosphate hydrolases"/>
    <property type="match status" value="1"/>
</dbReference>
<keyword id="KW-0067">ATP-binding</keyword>
<keyword id="KW-0342">GTP-binding</keyword>
<keyword id="KW-0547">Nucleotide-binding</keyword>
<feature type="chain" id="PRO_1000056863" description="Nucleotide-binding protein SAHV_0762">
    <location>
        <begin position="1"/>
        <end position="303"/>
    </location>
</feature>
<feature type="binding site" evidence="1">
    <location>
        <begin position="18"/>
        <end position="25"/>
    </location>
    <ligand>
        <name>ATP</name>
        <dbReference type="ChEBI" id="CHEBI:30616"/>
    </ligand>
</feature>
<feature type="binding site" evidence="1">
    <location>
        <begin position="69"/>
        <end position="72"/>
    </location>
    <ligand>
        <name>GTP</name>
        <dbReference type="ChEBI" id="CHEBI:37565"/>
    </ligand>
</feature>
<evidence type="ECO:0000255" key="1">
    <source>
        <dbReference type="HAMAP-Rule" id="MF_00636"/>
    </source>
</evidence>
<sequence>MDNNEKEKSKSELLVVTGLSGAGKSLVIQCLEDMGYFCVDNLPPVLLPKFVELMEQGNPSLRKVAIAIDLRGKELFNSLVAVVDKVKSESDVIIDVMFLEASTEKLISRYKETRRAHPLMEQGKRSLINAINDEREHLSQIRSIANFVIDTTKLSPKELKERIRRYYEDEEFETFTINVTSFGFKHGIQMDADLVFDVRFLPNPYYVVDLRPLTGLDKDVYNYVMKWKETEIFFEKLTDLLDFMIPGYKKEGKSQLVIAIGCTGGQHRSVALAERLGNYLNEVFEYNVYVHHRDAHIESGEKK</sequence>
<comment type="function">
    <text evidence="1">Displays ATPase and GTPase activities.</text>
</comment>
<comment type="similarity">
    <text evidence="1">Belongs to the RapZ-like family.</text>
</comment>
<protein>
    <recommendedName>
        <fullName evidence="1">Nucleotide-binding protein SAHV_0762</fullName>
    </recommendedName>
</protein>
<name>Y762_STAA1</name>